<name>RL6_BURCH</name>
<keyword id="KW-0687">Ribonucleoprotein</keyword>
<keyword id="KW-0689">Ribosomal protein</keyword>
<keyword id="KW-0694">RNA-binding</keyword>
<keyword id="KW-0699">rRNA-binding</keyword>
<proteinExistence type="inferred from homology"/>
<gene>
    <name evidence="1" type="primary">rplF</name>
    <name type="ordered locus">Bcen2424_0363</name>
</gene>
<dbReference type="EMBL" id="CP000458">
    <property type="protein sequence ID" value="ABK07117.1"/>
    <property type="molecule type" value="Genomic_DNA"/>
</dbReference>
<dbReference type="RefSeq" id="WP_006477184.1">
    <property type="nucleotide sequence ID" value="NC_008542.1"/>
</dbReference>
<dbReference type="SMR" id="A0K3P0"/>
<dbReference type="GeneID" id="83047146"/>
<dbReference type="KEGG" id="bch:Bcen2424_0363"/>
<dbReference type="HOGENOM" id="CLU_065464_1_2_4"/>
<dbReference type="GO" id="GO:0022625">
    <property type="term" value="C:cytosolic large ribosomal subunit"/>
    <property type="evidence" value="ECO:0007669"/>
    <property type="project" value="TreeGrafter"/>
</dbReference>
<dbReference type="GO" id="GO:0019843">
    <property type="term" value="F:rRNA binding"/>
    <property type="evidence" value="ECO:0007669"/>
    <property type="project" value="UniProtKB-UniRule"/>
</dbReference>
<dbReference type="GO" id="GO:0003735">
    <property type="term" value="F:structural constituent of ribosome"/>
    <property type="evidence" value="ECO:0007669"/>
    <property type="project" value="InterPro"/>
</dbReference>
<dbReference type="GO" id="GO:0002181">
    <property type="term" value="P:cytoplasmic translation"/>
    <property type="evidence" value="ECO:0007669"/>
    <property type="project" value="TreeGrafter"/>
</dbReference>
<dbReference type="FunFam" id="3.90.930.12:FF:000001">
    <property type="entry name" value="50S ribosomal protein L6"/>
    <property type="match status" value="1"/>
</dbReference>
<dbReference type="Gene3D" id="3.90.930.12">
    <property type="entry name" value="Ribosomal protein L6, alpha-beta domain"/>
    <property type="match status" value="2"/>
</dbReference>
<dbReference type="HAMAP" id="MF_01365_B">
    <property type="entry name" value="Ribosomal_uL6_B"/>
    <property type="match status" value="1"/>
</dbReference>
<dbReference type="InterPro" id="IPR000702">
    <property type="entry name" value="Ribosomal_uL6-like"/>
</dbReference>
<dbReference type="InterPro" id="IPR036789">
    <property type="entry name" value="Ribosomal_uL6-like_a/b-dom_sf"/>
</dbReference>
<dbReference type="InterPro" id="IPR020040">
    <property type="entry name" value="Ribosomal_uL6_a/b-dom"/>
</dbReference>
<dbReference type="InterPro" id="IPR019906">
    <property type="entry name" value="Ribosomal_uL6_bac-type"/>
</dbReference>
<dbReference type="InterPro" id="IPR002358">
    <property type="entry name" value="Ribosomal_uL6_CS"/>
</dbReference>
<dbReference type="NCBIfam" id="TIGR03654">
    <property type="entry name" value="L6_bact"/>
    <property type="match status" value="1"/>
</dbReference>
<dbReference type="PANTHER" id="PTHR11655">
    <property type="entry name" value="60S/50S RIBOSOMAL PROTEIN L6/L9"/>
    <property type="match status" value="1"/>
</dbReference>
<dbReference type="PANTHER" id="PTHR11655:SF14">
    <property type="entry name" value="LARGE RIBOSOMAL SUBUNIT PROTEIN UL6M"/>
    <property type="match status" value="1"/>
</dbReference>
<dbReference type="Pfam" id="PF00347">
    <property type="entry name" value="Ribosomal_L6"/>
    <property type="match status" value="2"/>
</dbReference>
<dbReference type="PIRSF" id="PIRSF002162">
    <property type="entry name" value="Ribosomal_L6"/>
    <property type="match status" value="1"/>
</dbReference>
<dbReference type="PRINTS" id="PR00059">
    <property type="entry name" value="RIBOSOMALL6"/>
</dbReference>
<dbReference type="SUPFAM" id="SSF56053">
    <property type="entry name" value="Ribosomal protein L6"/>
    <property type="match status" value="2"/>
</dbReference>
<dbReference type="PROSITE" id="PS00525">
    <property type="entry name" value="RIBOSOMAL_L6_1"/>
    <property type="match status" value="1"/>
</dbReference>
<accession>A0K3P0</accession>
<comment type="function">
    <text evidence="1">This protein binds to the 23S rRNA, and is important in its secondary structure. It is located near the subunit interface in the base of the L7/L12 stalk, and near the tRNA binding site of the peptidyltransferase center.</text>
</comment>
<comment type="subunit">
    <text evidence="1">Part of the 50S ribosomal subunit.</text>
</comment>
<comment type="similarity">
    <text evidence="1">Belongs to the universal ribosomal protein uL6 family.</text>
</comment>
<organism>
    <name type="scientific">Burkholderia cenocepacia (strain HI2424)</name>
    <dbReference type="NCBI Taxonomy" id="331272"/>
    <lineage>
        <taxon>Bacteria</taxon>
        <taxon>Pseudomonadati</taxon>
        <taxon>Pseudomonadota</taxon>
        <taxon>Betaproteobacteria</taxon>
        <taxon>Burkholderiales</taxon>
        <taxon>Burkholderiaceae</taxon>
        <taxon>Burkholderia</taxon>
        <taxon>Burkholderia cepacia complex</taxon>
    </lineage>
</organism>
<feature type="chain" id="PRO_1000055202" description="Large ribosomal subunit protein uL6">
    <location>
        <begin position="1"/>
        <end position="176"/>
    </location>
</feature>
<reference key="1">
    <citation type="submission" date="2006-08" db="EMBL/GenBank/DDBJ databases">
        <title>Complete sequence of chromosome 1 of Burkholderia cenocepacia HI2424.</title>
        <authorList>
            <person name="Copeland A."/>
            <person name="Lucas S."/>
            <person name="Lapidus A."/>
            <person name="Barry K."/>
            <person name="Detter J.C."/>
            <person name="Glavina del Rio T."/>
            <person name="Hammon N."/>
            <person name="Israni S."/>
            <person name="Pitluck S."/>
            <person name="Chain P."/>
            <person name="Malfatti S."/>
            <person name="Shin M."/>
            <person name="Vergez L."/>
            <person name="Schmutz J."/>
            <person name="Larimer F."/>
            <person name="Land M."/>
            <person name="Hauser L."/>
            <person name="Kyrpides N."/>
            <person name="Kim E."/>
            <person name="LiPuma J.J."/>
            <person name="Gonzalez C.F."/>
            <person name="Konstantinidis K."/>
            <person name="Tiedje J.M."/>
            <person name="Richardson P."/>
        </authorList>
    </citation>
    <scope>NUCLEOTIDE SEQUENCE [LARGE SCALE GENOMIC DNA]</scope>
    <source>
        <strain>HI2424</strain>
    </source>
</reference>
<protein>
    <recommendedName>
        <fullName evidence="1">Large ribosomal subunit protein uL6</fullName>
    </recommendedName>
    <alternativeName>
        <fullName evidence="2">50S ribosomal protein L6</fullName>
    </alternativeName>
</protein>
<sequence length="176" mass="18689">MSRVGKSPIALQGAEVKLADGAITVKGPLGTITQAINPLVNVANNDGTLNLSPVDESREANALSGTMRAIIANAVHGVTKGFERKLTLVGVGYRAQAQGDKLNLSLGFSHPVVHQMPEGVKAETPTQTEIVIKGINKQQVGQVAAEVRGYRPPEPYKGKGVRYADEVVILKETKKK</sequence>
<evidence type="ECO:0000255" key="1">
    <source>
        <dbReference type="HAMAP-Rule" id="MF_01365"/>
    </source>
</evidence>
<evidence type="ECO:0000305" key="2"/>